<feature type="chain" id="PRO_1000215241" description="ATP synthase subunit delta">
    <location>
        <begin position="1"/>
        <end position="184"/>
    </location>
</feature>
<comment type="function">
    <text evidence="1">F(1)F(0) ATP synthase produces ATP from ADP in the presence of a proton or sodium gradient. F-type ATPases consist of two structural domains, F(1) containing the extramembraneous catalytic core and F(0) containing the membrane proton channel, linked together by a central stalk and a peripheral stalk. During catalysis, ATP synthesis in the catalytic domain of F(1) is coupled via a rotary mechanism of the central stalk subunits to proton translocation.</text>
</comment>
<comment type="function">
    <text evidence="1">This protein is part of the stalk that links CF(0) to CF(1). It either transmits conformational changes from CF(0) to CF(1) or is implicated in proton conduction.</text>
</comment>
<comment type="subunit">
    <text evidence="1">F-type ATPases have 2 components, F(1) - the catalytic core - and F(0) - the membrane proton channel. F(1) has five subunits: alpha(3), beta(3), gamma(1), delta(1), epsilon(1). F(0) has three main subunits: a(1), b(2) and c(10-14). The alpha and beta chains form an alternating ring which encloses part of the gamma chain. F(1) is attached to F(0) by a central stalk formed by the gamma and epsilon chains, while a peripheral stalk is formed by the delta and b chains.</text>
</comment>
<comment type="subcellular location">
    <subcellularLocation>
        <location evidence="1">Cell membrane</location>
        <topology evidence="1">Peripheral membrane protein</topology>
    </subcellularLocation>
</comment>
<comment type="similarity">
    <text evidence="1">Belongs to the ATPase delta chain family.</text>
</comment>
<proteinExistence type="inferred from homology"/>
<keyword id="KW-0066">ATP synthesis</keyword>
<keyword id="KW-1003">Cell membrane</keyword>
<keyword id="KW-0139">CF(1)</keyword>
<keyword id="KW-0375">Hydrogen ion transport</keyword>
<keyword id="KW-0406">Ion transport</keyword>
<keyword id="KW-0472">Membrane</keyword>
<keyword id="KW-0813">Transport</keyword>
<reference key="1">
    <citation type="journal article" date="2009" name="BMC Genomics">
        <title>Analysis of the Rickettsia africae genome reveals that virulence acquisition in Rickettsia species may be explained by genome reduction.</title>
        <authorList>
            <person name="Fournier P.-E."/>
            <person name="El Karkouri K."/>
            <person name="Leroy Q."/>
            <person name="Robert C."/>
            <person name="Giumelli B."/>
            <person name="Renesto P."/>
            <person name="Socolovschi C."/>
            <person name="Parola P."/>
            <person name="Audic S."/>
            <person name="Raoult D."/>
        </authorList>
    </citation>
    <scope>NUCLEOTIDE SEQUENCE [LARGE SCALE GENOMIC DNA]</scope>
    <source>
        <strain>ESF-5</strain>
    </source>
</reference>
<gene>
    <name evidence="1" type="primary">atpH</name>
    <name type="ordered locus">RAF_ORF1129</name>
</gene>
<accession>C3PLT4</accession>
<sequence length="184" mass="20983">MNKGNLIKNYAVALLNNAMVDNIQDKIFEEITSINRIITDNFDIREFLFSPIVNKNDKINAVNLLAKNIKISTIVQNFLLLLVKNSRTAILSNIVNAYNTLLYESKNIKIVQVISANKLQPKEQEWIKSRIEKELNQKTEILFDIDNTIIGGIVIKYDSMLQDYSIKGSLEKIKKALKTVNIAV</sequence>
<protein>
    <recommendedName>
        <fullName evidence="1">ATP synthase subunit delta</fullName>
    </recommendedName>
    <alternativeName>
        <fullName evidence="1">ATP synthase F(1) sector subunit delta</fullName>
    </alternativeName>
    <alternativeName>
        <fullName evidence="1">F-type ATPase subunit delta</fullName>
        <shortName evidence="1">F-ATPase subunit delta</shortName>
    </alternativeName>
</protein>
<evidence type="ECO:0000255" key="1">
    <source>
        <dbReference type="HAMAP-Rule" id="MF_01416"/>
    </source>
</evidence>
<name>ATPD_RICAE</name>
<organism>
    <name type="scientific">Rickettsia africae (strain ESF-5)</name>
    <dbReference type="NCBI Taxonomy" id="347255"/>
    <lineage>
        <taxon>Bacteria</taxon>
        <taxon>Pseudomonadati</taxon>
        <taxon>Pseudomonadota</taxon>
        <taxon>Alphaproteobacteria</taxon>
        <taxon>Rickettsiales</taxon>
        <taxon>Rickettsiaceae</taxon>
        <taxon>Rickettsieae</taxon>
        <taxon>Rickettsia</taxon>
        <taxon>spotted fever group</taxon>
    </lineage>
</organism>
<dbReference type="EMBL" id="CP001612">
    <property type="protein sequence ID" value="ACP53924.1"/>
    <property type="molecule type" value="Genomic_DNA"/>
</dbReference>
<dbReference type="RefSeq" id="WP_012720052.1">
    <property type="nucleotide sequence ID" value="NC_012633.1"/>
</dbReference>
<dbReference type="SMR" id="C3PLT4"/>
<dbReference type="KEGG" id="raf:RAF_ORF1129"/>
<dbReference type="HOGENOM" id="CLU_085114_1_1_5"/>
<dbReference type="Proteomes" id="UP000002305">
    <property type="component" value="Chromosome"/>
</dbReference>
<dbReference type="GO" id="GO:0005886">
    <property type="term" value="C:plasma membrane"/>
    <property type="evidence" value="ECO:0007669"/>
    <property type="project" value="UniProtKB-SubCell"/>
</dbReference>
<dbReference type="GO" id="GO:0045259">
    <property type="term" value="C:proton-transporting ATP synthase complex"/>
    <property type="evidence" value="ECO:0007669"/>
    <property type="project" value="UniProtKB-KW"/>
</dbReference>
<dbReference type="GO" id="GO:0046933">
    <property type="term" value="F:proton-transporting ATP synthase activity, rotational mechanism"/>
    <property type="evidence" value="ECO:0007669"/>
    <property type="project" value="UniProtKB-UniRule"/>
</dbReference>
<dbReference type="Gene3D" id="1.10.520.20">
    <property type="entry name" value="N-terminal domain of the delta subunit of the F1F0-ATP synthase"/>
    <property type="match status" value="1"/>
</dbReference>
<dbReference type="HAMAP" id="MF_01416">
    <property type="entry name" value="ATP_synth_delta_bact"/>
    <property type="match status" value="1"/>
</dbReference>
<dbReference type="InterPro" id="IPR026015">
    <property type="entry name" value="ATP_synth_OSCP/delta_N_sf"/>
</dbReference>
<dbReference type="InterPro" id="IPR000711">
    <property type="entry name" value="ATPase_OSCP/dsu"/>
</dbReference>
<dbReference type="NCBIfam" id="TIGR01145">
    <property type="entry name" value="ATP_synt_delta"/>
    <property type="match status" value="1"/>
</dbReference>
<dbReference type="PANTHER" id="PTHR11910">
    <property type="entry name" value="ATP SYNTHASE DELTA CHAIN"/>
    <property type="match status" value="1"/>
</dbReference>
<dbReference type="Pfam" id="PF00213">
    <property type="entry name" value="OSCP"/>
    <property type="match status" value="1"/>
</dbReference>
<dbReference type="PRINTS" id="PR00125">
    <property type="entry name" value="ATPASEDELTA"/>
</dbReference>
<dbReference type="SUPFAM" id="SSF47928">
    <property type="entry name" value="N-terminal domain of the delta subunit of the F1F0-ATP synthase"/>
    <property type="match status" value="1"/>
</dbReference>